<keyword id="KW-0067">ATP-binding</keyword>
<keyword id="KW-1003">Cell membrane</keyword>
<keyword id="KW-0227">DNA damage</keyword>
<keyword id="KW-0234">DNA repair</keyword>
<keyword id="KW-0472">Membrane</keyword>
<keyword id="KW-0547">Nucleotide-binding</keyword>
<keyword id="KW-0539">Nucleus</keyword>
<keyword id="KW-1185">Reference proteome</keyword>
<keyword id="KW-0808">Transferase</keyword>
<keyword id="KW-0833">Ubl conjugation pathway</keyword>
<protein>
    <recommendedName>
        <fullName evidence="5">Ubiquitin-conjugating enzyme E2 B</fullName>
        <ecNumber evidence="1">2.3.2.23</ecNumber>
    </recommendedName>
    <alternativeName>
        <fullName>E2 ubiquitin-conjugating enzyme B</fullName>
    </alternativeName>
    <alternativeName>
        <fullName>RAD6 homolog B</fullName>
        <shortName>HR6B</shortName>
    </alternativeName>
    <alternativeName>
        <fullName>Ubiquitin carrier protein B</fullName>
    </alternativeName>
    <alternativeName>
        <fullName>Ubiquitin-conjugating enzyme E2(14k)</fullName>
    </alternativeName>
    <alternativeName>
        <fullName>Ubiquitin-protein ligase B</fullName>
    </alternativeName>
</protein>
<sequence>MSTPARRRLMRDFKRLQEDPPVGVSGAPSENNIMQWNAVIFGPEGTPFEDGTFKLVIEFSEEYPNKPPTVRFLSKMFHPNVYADGSICLDILQNRWSPTYDVSSILTSIQSLLDEPNPNSPANSQAAQLYQENKREYEKRVSAIVEQSWNDS</sequence>
<reference key="1">
    <citation type="journal article" date="1992" name="J. Biol. Chem.">
        <title>A rabbit reticulocyte ubiquitin carrier protein that supports ubiquitin-dependent proteolysis (E214k) is homologous to the yeast DNA repair gene RAD6.</title>
        <authorList>
            <person name="Wing S.S."/>
            <person name="Dumas F."/>
            <person name="Banville D."/>
        </authorList>
    </citation>
    <scope>NUCLEOTIDE SEQUENCE [MRNA]</scope>
</reference>
<proteinExistence type="evidence at transcript level"/>
<gene>
    <name type="primary">UBE2B</name>
    <name type="synonym">RAD6B</name>
</gene>
<name>UBE2B_RABIT</name>
<organism>
    <name type="scientific">Oryctolagus cuniculus</name>
    <name type="common">Rabbit</name>
    <dbReference type="NCBI Taxonomy" id="9986"/>
    <lineage>
        <taxon>Eukaryota</taxon>
        <taxon>Metazoa</taxon>
        <taxon>Chordata</taxon>
        <taxon>Craniata</taxon>
        <taxon>Vertebrata</taxon>
        <taxon>Euteleostomi</taxon>
        <taxon>Mammalia</taxon>
        <taxon>Eutheria</taxon>
        <taxon>Euarchontoglires</taxon>
        <taxon>Glires</taxon>
        <taxon>Lagomorpha</taxon>
        <taxon>Leporidae</taxon>
        <taxon>Oryctolagus</taxon>
    </lineage>
</organism>
<comment type="function">
    <text evidence="1 2">E2 ubiquitin-conjugating enzyme that accepts ubiquitin from the ubiquitin-activating enzyme E1 and transfers it to a E3 ubiquitin-protein ligase (By similarity). In vitro catalyzes 'Lys-11'-, as well as 'Lys-48'- and 'Lys-63'-linked polyubiquitination (By similarity). Together with the E3 enzyme BRE1 (RNF20 and/or RNF40), plays a role in transcription regulation by catalyzing the monoubiquitination of histone H2B at 'Lys-120' to form H2BK120ub1 (By similarity). H2BK120ub1 gives a specific tag for epigenetic transcriptional activation, elongation by RNA polymerase II, telomeric silencing, and is also a prerequisite for H3K4me and H3K79me formation (By similarity). May play a role in DNA repair (By similarity). Associates to the E3 ligase RAD18 to form the UBE2B-RAD18 ubiquitin ligase complex involved in mono-ubiquitination of DNA-associated PCNA on 'Lys-164' (By similarity). In association with the E3 enzyme UBR4, is involved in N-end rule-dependent protein degradation (By similarity). May be involved in neurite outgrowth (By similarity).</text>
</comment>
<comment type="catalytic activity">
    <reaction evidence="1 3 4">
        <text>S-ubiquitinyl-[E1 ubiquitin-activating enzyme]-L-cysteine + [E2 ubiquitin-conjugating enzyme]-L-cysteine = [E1 ubiquitin-activating enzyme]-L-cysteine + S-ubiquitinyl-[E2 ubiquitin-conjugating enzyme]-L-cysteine.</text>
        <dbReference type="EC" id="2.3.2.23"/>
    </reaction>
</comment>
<comment type="pathway">
    <text evidence="1 3">Protein modification; protein ubiquitination.</text>
</comment>
<comment type="subunit">
    <text evidence="1">Interacts with RAD18, UBR2 and WAC.</text>
</comment>
<comment type="subcellular location">
    <subcellularLocation>
        <location evidence="2">Cell membrane</location>
    </subcellularLocation>
    <subcellularLocation>
        <location evidence="2">Nucleus</location>
    </subcellularLocation>
    <text evidence="2">In peripheral neurons, expressed both at the plasma membrane and in nuclei.</text>
</comment>
<comment type="similarity">
    <text evidence="3">Belongs to the ubiquitin-conjugating enzyme family.</text>
</comment>
<feature type="chain" id="PRO_0000082449" description="Ubiquitin-conjugating enzyme E2 B">
    <location>
        <begin position="1"/>
        <end position="152"/>
    </location>
</feature>
<feature type="domain" description="UBC core" evidence="3">
    <location>
        <begin position="4"/>
        <end position="150"/>
    </location>
</feature>
<feature type="active site" description="Glycyl thioester intermediate" evidence="3 4">
    <location>
        <position position="88"/>
    </location>
</feature>
<dbReference type="EC" id="2.3.2.23" evidence="1"/>
<dbReference type="EMBL" id="M62387">
    <property type="protein sequence ID" value="AAA31492.1"/>
    <property type="molecule type" value="mRNA"/>
</dbReference>
<dbReference type="PIR" id="A42416">
    <property type="entry name" value="A42416"/>
</dbReference>
<dbReference type="RefSeq" id="NP_001075765.1">
    <property type="nucleotide sequence ID" value="NM_001082296.1"/>
</dbReference>
<dbReference type="BMRB" id="P63148"/>
<dbReference type="SMR" id="P63148"/>
<dbReference type="BioGRID" id="1172155">
    <property type="interactions" value="1"/>
</dbReference>
<dbReference type="FunCoup" id="P63148">
    <property type="interactions" value="1243"/>
</dbReference>
<dbReference type="IntAct" id="P63148">
    <property type="interactions" value="2"/>
</dbReference>
<dbReference type="STRING" id="9986.ENSOCUP00000014382"/>
<dbReference type="PaxDb" id="9986-ENSOCUP00000013548"/>
<dbReference type="Ensembl" id="ENSOCUT00000015769.2">
    <property type="protein sequence ID" value="ENSOCUP00000013548.2"/>
    <property type="gene ID" value="ENSOCUG00000015774.3"/>
</dbReference>
<dbReference type="GeneID" id="100009132"/>
<dbReference type="KEGG" id="ocu:100009132"/>
<dbReference type="CTD" id="7320"/>
<dbReference type="eggNOG" id="KOG0419">
    <property type="taxonomic scope" value="Eukaryota"/>
</dbReference>
<dbReference type="GeneTree" id="ENSGT00940000156580"/>
<dbReference type="HOGENOM" id="CLU_030988_10_2_1"/>
<dbReference type="InParanoid" id="P63148"/>
<dbReference type="OMA" id="MMYCHAI"/>
<dbReference type="OrthoDB" id="9984419at2759"/>
<dbReference type="TreeFam" id="TF101128"/>
<dbReference type="UniPathway" id="UPA00143"/>
<dbReference type="Proteomes" id="UP000001811">
    <property type="component" value="Chromosome 3"/>
</dbReference>
<dbReference type="Bgee" id="ENSOCUG00000015774">
    <property type="expression patterns" value="Expressed in blood and 15 other cell types or tissues"/>
</dbReference>
<dbReference type="GO" id="GO:0033503">
    <property type="term" value="C:HULC complex"/>
    <property type="evidence" value="ECO:0000250"/>
    <property type="project" value="UniProtKB"/>
</dbReference>
<dbReference type="GO" id="GO:0005634">
    <property type="term" value="C:nucleus"/>
    <property type="evidence" value="ECO:0007669"/>
    <property type="project" value="UniProtKB-SubCell"/>
</dbReference>
<dbReference type="GO" id="GO:0005886">
    <property type="term" value="C:plasma membrane"/>
    <property type="evidence" value="ECO:0007669"/>
    <property type="project" value="UniProtKB-SubCell"/>
</dbReference>
<dbReference type="GO" id="GO:0005524">
    <property type="term" value="F:ATP binding"/>
    <property type="evidence" value="ECO:0007669"/>
    <property type="project" value="UniProtKB-KW"/>
</dbReference>
<dbReference type="GO" id="GO:0061631">
    <property type="term" value="F:ubiquitin conjugating enzyme activity"/>
    <property type="evidence" value="ECO:0007669"/>
    <property type="project" value="UniProtKB-EC"/>
</dbReference>
<dbReference type="GO" id="GO:0004842">
    <property type="term" value="F:ubiquitin-protein transferase activity"/>
    <property type="evidence" value="ECO:0000250"/>
    <property type="project" value="UniProtKB"/>
</dbReference>
<dbReference type="GO" id="GO:0006281">
    <property type="term" value="P:DNA repair"/>
    <property type="evidence" value="ECO:0007669"/>
    <property type="project" value="UniProtKB-KW"/>
</dbReference>
<dbReference type="GO" id="GO:0070979">
    <property type="term" value="P:protein K11-linked ubiquitination"/>
    <property type="evidence" value="ECO:0000250"/>
    <property type="project" value="UniProtKB"/>
</dbReference>
<dbReference type="GO" id="GO:0070936">
    <property type="term" value="P:protein K48-linked ubiquitination"/>
    <property type="evidence" value="ECO:0000250"/>
    <property type="project" value="UniProtKB"/>
</dbReference>
<dbReference type="GO" id="GO:0070534">
    <property type="term" value="P:protein K63-linked ubiquitination"/>
    <property type="evidence" value="ECO:0000250"/>
    <property type="project" value="UniProtKB"/>
</dbReference>
<dbReference type="CDD" id="cd23790">
    <property type="entry name" value="UBCc_UBE2A_2B"/>
    <property type="match status" value="1"/>
</dbReference>
<dbReference type="FunFam" id="3.10.110.10:FF:000062">
    <property type="entry name" value="Ubiquitin-conjugating enzyme E2 B"/>
    <property type="match status" value="1"/>
</dbReference>
<dbReference type="Gene3D" id="3.10.110.10">
    <property type="entry name" value="Ubiquitin Conjugating Enzyme"/>
    <property type="match status" value="1"/>
</dbReference>
<dbReference type="InterPro" id="IPR050113">
    <property type="entry name" value="Ub_conjugating_enzyme"/>
</dbReference>
<dbReference type="InterPro" id="IPR000608">
    <property type="entry name" value="UBQ-conjugat_E2_core"/>
</dbReference>
<dbReference type="InterPro" id="IPR023313">
    <property type="entry name" value="UBQ-conjugating_AS"/>
</dbReference>
<dbReference type="InterPro" id="IPR016135">
    <property type="entry name" value="UBQ-conjugating_enzyme/RWD"/>
</dbReference>
<dbReference type="PANTHER" id="PTHR24067">
    <property type="entry name" value="UBIQUITIN-CONJUGATING ENZYME E2"/>
    <property type="match status" value="1"/>
</dbReference>
<dbReference type="Pfam" id="PF00179">
    <property type="entry name" value="UQ_con"/>
    <property type="match status" value="1"/>
</dbReference>
<dbReference type="SMART" id="SM00212">
    <property type="entry name" value="UBCc"/>
    <property type="match status" value="1"/>
</dbReference>
<dbReference type="SUPFAM" id="SSF54495">
    <property type="entry name" value="UBC-like"/>
    <property type="match status" value="1"/>
</dbReference>
<dbReference type="PROSITE" id="PS00183">
    <property type="entry name" value="UBC_1"/>
    <property type="match status" value="1"/>
</dbReference>
<dbReference type="PROSITE" id="PS50127">
    <property type="entry name" value="UBC_2"/>
    <property type="match status" value="1"/>
</dbReference>
<evidence type="ECO:0000250" key="1">
    <source>
        <dbReference type="UniProtKB" id="P63146"/>
    </source>
</evidence>
<evidence type="ECO:0000250" key="2">
    <source>
        <dbReference type="UniProtKB" id="P63149"/>
    </source>
</evidence>
<evidence type="ECO:0000255" key="3">
    <source>
        <dbReference type="PROSITE-ProRule" id="PRU00388"/>
    </source>
</evidence>
<evidence type="ECO:0000255" key="4">
    <source>
        <dbReference type="PROSITE-ProRule" id="PRU10133"/>
    </source>
</evidence>
<evidence type="ECO:0000305" key="5"/>
<accession>P63148</accession>
<accession>P23567</accession>
<accession>Q9D0J6</accession>